<sequence length="1045" mass="115423">MNKTNPERKISLTSFKERMACKEKPRDLQVLLIISIVLSCSFAVSATVEEANALLKWKSTFTNQTSSSKLSSWVNPNTSSFCTSWYGVACSLGSIIRLNLTNTGIEGTFEDFPFSSLPNLTFVDLSMNRFSGTISPLWGRFSKLEYFDLSINQLVGEIPPELGDLSNLDTLHLVENKLNGSIPSEIGRLTKVTEIAIYDNLLTGPIPSSFGNLTKLVNLYLFINSLSGSIPSEIGNLPNLRELCLDRNNLTGKIPSSFGNLKNVTLLNMFENQLSGEIPPEIGNMTALDTLSLHTNKLTGPIPSTLGNIKTLAVLHLYLNQLNGSIPPELGEMESMIDLEISENKLTGPVPDSFGKLTALEWLFLRDNQLSGPIPPGIANSTELTVLQLDTNNFTGFLPDTICRGGKLENLTLDDNHFEGPVPKSLRDCKSLIRVRFKGNSFSGDISEAFGVYPTLNFIDLSNNNFHGQLSANWEQSQKLVAFILSNNSITGAIPPEIWNMTQLSQLDLSSNRITGELPESISNINRISKLQLNGNRLSGKIPSGIRLLTNLEYLDLSSNRFSSEIPPTLNNLPRLYYMNLSRNDLDQTIPEGLTKLSQLQMLDLSYNQLDGEISSQFRSLQNLERLDLSHNNLSGQIPPSFKDMLALTHVDVSHNNLQGPIPDNAAFRNAPPDAFEGNKDLCGSVNTTQGLKPCSITSSKKSHKDRNLIIYILVPIIGAIIILSVCAGIFICFRKRTKQIEEHTDSESGGETLSIFSFDGKVRYQEIIKATGEFDPKYLIGTGGHGKVYKAKLPNAIMAVKKLNETTDSSISNPSTKQEFLNEIRALTEIRHRNVVKLFGFCSHRRNTFLVYEYMERGSLRKVLENDDEAKKLDWGKRINVVKGVAHALSYMHHDRSPAIVHRDISSGNILLGEDYEAKISDFGTAKLLKPDSSNWSAVAGTYGYVAPELAYAMKVTEKCDVYSFGVLTLEVIKGEHPGDLVSTLSSSPPDATLSLKSISDHRLPEPTPEIKEEVLEILKVALLCLHSDPQARPTMLSISTAFS</sequence>
<protein>
    <recommendedName>
        <fullName evidence="13">MDIS1-interacting receptor like kinase 2</fullName>
        <shortName evidence="13">AtMIK2</shortName>
    </recommendedName>
    <alternativeName>
        <fullName>Probable LRR receptor-like serine/threonine-protein kinase At4g08850</fullName>
        <ecNumber evidence="15">2.7.11.1</ecNumber>
    </alternativeName>
</protein>
<gene>
    <name evidence="13" type="primary">MIK2</name>
    <name evidence="17" type="ordered locus">At4g08850</name>
    <name evidence="18" type="ORF">T32A17.160</name>
</gene>
<name>MIK2_ARATH</name>
<dbReference type="EC" id="2.7.11.1" evidence="15"/>
<dbReference type="EMBL" id="AL161513">
    <property type="protein sequence ID" value="CAB78010.1"/>
    <property type="status" value="ALT_SEQ"/>
    <property type="molecule type" value="Genomic_DNA"/>
</dbReference>
<dbReference type="EMBL" id="AL161813">
    <property type="protein sequence ID" value="CAB82121.1"/>
    <property type="status" value="ALT_SEQ"/>
    <property type="molecule type" value="Genomic_DNA"/>
</dbReference>
<dbReference type="EMBL" id="CP002687">
    <property type="protein sequence ID" value="AEE82682.1"/>
    <property type="molecule type" value="Genomic_DNA"/>
</dbReference>
<dbReference type="EMBL" id="CP002687">
    <property type="protein sequence ID" value="AEE82683.1"/>
    <property type="molecule type" value="Genomic_DNA"/>
</dbReference>
<dbReference type="EMBL" id="AY064972">
    <property type="protein sequence ID" value="AAL57627.1"/>
    <property type="molecule type" value="mRNA"/>
</dbReference>
<dbReference type="EMBL" id="AK317056">
    <property type="protein sequence ID" value="BAH19749.1"/>
    <property type="molecule type" value="mRNA"/>
</dbReference>
<dbReference type="EMBL" id="FJ708744">
    <property type="protein sequence ID" value="ACN59338.1"/>
    <property type="molecule type" value="mRNA"/>
</dbReference>
<dbReference type="EMBL" id="AF083700">
    <property type="protein sequence ID" value="AAN60259.1"/>
    <property type="status" value="ALT_INIT"/>
    <property type="molecule type" value="mRNA"/>
</dbReference>
<dbReference type="PIR" id="B85089">
    <property type="entry name" value="B85089"/>
</dbReference>
<dbReference type="RefSeq" id="NP_192625.4">
    <molecule id="Q8VZG8-2"/>
    <property type="nucleotide sequence ID" value="NM_116955.5"/>
</dbReference>
<dbReference type="RefSeq" id="NP_849538.2">
    <molecule id="Q8VZG8-1"/>
    <property type="nucleotide sequence ID" value="NM_179207.3"/>
</dbReference>
<dbReference type="PDB" id="8WEB">
    <property type="method" value="X-ray"/>
    <property type="resolution" value="1.95 A"/>
    <property type="chains" value="A=1-700"/>
</dbReference>
<dbReference type="PDB" id="8WEC">
    <property type="method" value="X-ray"/>
    <property type="resolution" value="3.10 A"/>
    <property type="chains" value="A/D=1-683"/>
</dbReference>
<dbReference type="PDB" id="8WED">
    <property type="method" value="X-ray"/>
    <property type="resolution" value="3.30 A"/>
    <property type="chains" value="A/D=1-683"/>
</dbReference>
<dbReference type="PDB" id="8WEE">
    <property type="method" value="X-ray"/>
    <property type="resolution" value="2.19 A"/>
    <property type="chains" value="A=1-700"/>
</dbReference>
<dbReference type="PDB" id="8YAA">
    <property type="method" value="EM"/>
    <property type="resolution" value="3.34 A"/>
    <property type="chains" value="A=43-696"/>
</dbReference>
<dbReference type="PDBsum" id="8WEB"/>
<dbReference type="PDBsum" id="8WEC"/>
<dbReference type="PDBsum" id="8WED"/>
<dbReference type="PDBsum" id="8WEE"/>
<dbReference type="PDBsum" id="8YAA"/>
<dbReference type="EMDB" id="EMD-39093"/>
<dbReference type="SMR" id="Q8VZG8"/>
<dbReference type="BioGRID" id="11755">
    <property type="interactions" value="15"/>
</dbReference>
<dbReference type="DIP" id="DIP-53470N"/>
<dbReference type="FunCoup" id="Q8VZG8">
    <property type="interactions" value="314"/>
</dbReference>
<dbReference type="IntAct" id="Q8VZG8">
    <property type="interactions" value="12"/>
</dbReference>
<dbReference type="STRING" id="3702.Q8VZG8"/>
<dbReference type="GlyCosmos" id="Q8VZG8">
    <property type="glycosylation" value="18 sites, No reported glycans"/>
</dbReference>
<dbReference type="GlyGen" id="Q8VZG8">
    <property type="glycosylation" value="19 sites"/>
</dbReference>
<dbReference type="iPTMnet" id="Q8VZG8"/>
<dbReference type="SwissPalm" id="Q8VZG8"/>
<dbReference type="PaxDb" id="3702-AT4G08850.1"/>
<dbReference type="ProteomicsDB" id="238339">
    <molecule id="Q8VZG8-1"/>
</dbReference>
<dbReference type="EnsemblPlants" id="AT4G08850.1">
    <molecule id="Q8VZG8-1"/>
    <property type="protein sequence ID" value="AT4G08850.1"/>
    <property type="gene ID" value="AT4G08850"/>
</dbReference>
<dbReference type="EnsemblPlants" id="AT4G08850.2">
    <molecule id="Q8VZG8-2"/>
    <property type="protein sequence ID" value="AT4G08850.2"/>
    <property type="gene ID" value="AT4G08850"/>
</dbReference>
<dbReference type="GeneID" id="826456"/>
<dbReference type="Gramene" id="AT4G08850.1">
    <molecule id="Q8VZG8-1"/>
    <property type="protein sequence ID" value="AT4G08850.1"/>
    <property type="gene ID" value="AT4G08850"/>
</dbReference>
<dbReference type="Gramene" id="AT4G08850.2">
    <molecule id="Q8VZG8-2"/>
    <property type="protein sequence ID" value="AT4G08850.2"/>
    <property type="gene ID" value="AT4G08850"/>
</dbReference>
<dbReference type="KEGG" id="ath:AT4G08850"/>
<dbReference type="Araport" id="AT4G08850"/>
<dbReference type="TAIR" id="AT4G08850">
    <property type="gene designation" value="MIK2"/>
</dbReference>
<dbReference type="eggNOG" id="ENOG502QQYD">
    <property type="taxonomic scope" value="Eukaryota"/>
</dbReference>
<dbReference type="HOGENOM" id="CLU_000288_22_1_1"/>
<dbReference type="InParanoid" id="Q8VZG8"/>
<dbReference type="OMA" id="DVERWDY"/>
<dbReference type="PhylomeDB" id="Q8VZG8"/>
<dbReference type="PRO" id="PR:Q8VZG8"/>
<dbReference type="Proteomes" id="UP000006548">
    <property type="component" value="Chromosome 4"/>
</dbReference>
<dbReference type="ExpressionAtlas" id="Q8VZG8">
    <property type="expression patterns" value="baseline and differential"/>
</dbReference>
<dbReference type="GO" id="GO:0005886">
    <property type="term" value="C:plasma membrane"/>
    <property type="evidence" value="ECO:0007005"/>
    <property type="project" value="TAIR"/>
</dbReference>
<dbReference type="GO" id="GO:0009506">
    <property type="term" value="C:plasmodesma"/>
    <property type="evidence" value="ECO:0007005"/>
    <property type="project" value="TAIR"/>
</dbReference>
<dbReference type="GO" id="GO:0090406">
    <property type="term" value="C:pollen tube"/>
    <property type="evidence" value="ECO:0000314"/>
    <property type="project" value="TAIR"/>
</dbReference>
<dbReference type="GO" id="GO:0005524">
    <property type="term" value="F:ATP binding"/>
    <property type="evidence" value="ECO:0007669"/>
    <property type="project" value="UniProtKB-KW"/>
</dbReference>
<dbReference type="GO" id="GO:0042277">
    <property type="term" value="F:peptide binding"/>
    <property type="evidence" value="ECO:0000314"/>
    <property type="project" value="UniProtKB"/>
</dbReference>
<dbReference type="GO" id="GO:0001653">
    <property type="term" value="F:peptide receptor activity"/>
    <property type="evidence" value="ECO:0000315"/>
    <property type="project" value="UniProtKB"/>
</dbReference>
<dbReference type="GO" id="GO:0106310">
    <property type="term" value="F:protein serine kinase activity"/>
    <property type="evidence" value="ECO:0007669"/>
    <property type="project" value="RHEA"/>
</dbReference>
<dbReference type="GO" id="GO:0004674">
    <property type="term" value="F:protein serine/threonine kinase activity"/>
    <property type="evidence" value="ECO:0007669"/>
    <property type="project" value="UniProtKB-KW"/>
</dbReference>
<dbReference type="GO" id="GO:1901653">
    <property type="term" value="P:cellular response to peptide"/>
    <property type="evidence" value="ECO:0000315"/>
    <property type="project" value="UniProtKB"/>
</dbReference>
<dbReference type="GO" id="GO:0002213">
    <property type="term" value="P:defense response to insect"/>
    <property type="evidence" value="ECO:0000315"/>
    <property type="project" value="UniProtKB"/>
</dbReference>
<dbReference type="GO" id="GO:0009759">
    <property type="term" value="P:indole glucosinolate biosynthetic process"/>
    <property type="evidence" value="ECO:0000315"/>
    <property type="project" value="UniProtKB"/>
</dbReference>
<dbReference type="GO" id="GO:0009695">
    <property type="term" value="P:jasmonic acid biosynthetic process"/>
    <property type="evidence" value="ECO:0000315"/>
    <property type="project" value="UniProtKB"/>
</dbReference>
<dbReference type="GO" id="GO:0010183">
    <property type="term" value="P:pollen tube guidance"/>
    <property type="evidence" value="ECO:0000316"/>
    <property type="project" value="TAIR"/>
</dbReference>
<dbReference type="GO" id="GO:0031349">
    <property type="term" value="P:positive regulation of defense response"/>
    <property type="evidence" value="ECO:0000315"/>
    <property type="project" value="UniProtKB"/>
</dbReference>
<dbReference type="GO" id="GO:0080027">
    <property type="term" value="P:response to herbivore"/>
    <property type="evidence" value="ECO:0000315"/>
    <property type="project" value="UniProtKB"/>
</dbReference>
<dbReference type="GO" id="GO:0002237">
    <property type="term" value="P:response to molecule of bacterial origin"/>
    <property type="evidence" value="ECO:0000270"/>
    <property type="project" value="UniProtKB"/>
</dbReference>
<dbReference type="FunFam" id="3.30.200.20:FF:000309">
    <property type="entry name" value="Leucine-rich repeat receptor protein kinase MSP1"/>
    <property type="match status" value="1"/>
</dbReference>
<dbReference type="FunFam" id="1.10.510.10:FF:000445">
    <property type="entry name" value="MDIS1-interacting receptor like kinase 2"/>
    <property type="match status" value="1"/>
</dbReference>
<dbReference type="FunFam" id="3.80.10.10:FF:000719">
    <property type="entry name" value="MDIS1-interacting receptor like kinase 2 isoform A"/>
    <property type="match status" value="1"/>
</dbReference>
<dbReference type="FunFam" id="3.80.10.10:FF:000400">
    <property type="entry name" value="Nuclear pore complex protein NUP107"/>
    <property type="match status" value="1"/>
</dbReference>
<dbReference type="FunFam" id="3.80.10.10:FF:000416">
    <property type="entry name" value="Probable leucine-rich repeat receptor-like protein kinase At5g63930"/>
    <property type="match status" value="1"/>
</dbReference>
<dbReference type="FunFam" id="3.80.10.10:FF:000213">
    <property type="entry name" value="Tyrosine-sulfated glycopeptide receptor 1"/>
    <property type="match status" value="2"/>
</dbReference>
<dbReference type="Gene3D" id="3.30.200.20">
    <property type="entry name" value="Phosphorylase Kinase, domain 1"/>
    <property type="match status" value="1"/>
</dbReference>
<dbReference type="Gene3D" id="3.80.10.10">
    <property type="entry name" value="Ribonuclease Inhibitor"/>
    <property type="match status" value="4"/>
</dbReference>
<dbReference type="Gene3D" id="1.10.510.10">
    <property type="entry name" value="Transferase(Phosphotransferase) domain 1"/>
    <property type="match status" value="1"/>
</dbReference>
<dbReference type="InterPro" id="IPR011009">
    <property type="entry name" value="Kinase-like_dom_sf"/>
</dbReference>
<dbReference type="InterPro" id="IPR001611">
    <property type="entry name" value="Leu-rich_rpt"/>
</dbReference>
<dbReference type="InterPro" id="IPR003591">
    <property type="entry name" value="Leu-rich_rpt_typical-subtyp"/>
</dbReference>
<dbReference type="InterPro" id="IPR032675">
    <property type="entry name" value="LRR_dom_sf"/>
</dbReference>
<dbReference type="InterPro" id="IPR013210">
    <property type="entry name" value="LRR_N_plant-typ"/>
</dbReference>
<dbReference type="InterPro" id="IPR055414">
    <property type="entry name" value="LRR_R13L4/SHOC2-like"/>
</dbReference>
<dbReference type="InterPro" id="IPR000719">
    <property type="entry name" value="Prot_kinase_dom"/>
</dbReference>
<dbReference type="InterPro" id="IPR017441">
    <property type="entry name" value="Protein_kinase_ATP_BS"/>
</dbReference>
<dbReference type="InterPro" id="IPR051420">
    <property type="entry name" value="Ser_Thr_Kinases_DiverseReg"/>
</dbReference>
<dbReference type="InterPro" id="IPR008266">
    <property type="entry name" value="Tyr_kinase_AS"/>
</dbReference>
<dbReference type="PANTHER" id="PTHR48005">
    <property type="entry name" value="LEUCINE RICH REPEAT KINASE 2"/>
    <property type="match status" value="1"/>
</dbReference>
<dbReference type="PANTHER" id="PTHR48005:SF16">
    <property type="entry name" value="MDIS1-INTERACTING RECEPTOR LIKE KINASE 2-LIKE ISOFORM X1"/>
    <property type="match status" value="1"/>
</dbReference>
<dbReference type="Pfam" id="PF00560">
    <property type="entry name" value="LRR_1"/>
    <property type="match status" value="3"/>
</dbReference>
<dbReference type="Pfam" id="PF23598">
    <property type="entry name" value="LRR_14"/>
    <property type="match status" value="1"/>
</dbReference>
<dbReference type="Pfam" id="PF13855">
    <property type="entry name" value="LRR_8"/>
    <property type="match status" value="2"/>
</dbReference>
<dbReference type="Pfam" id="PF08263">
    <property type="entry name" value="LRRNT_2"/>
    <property type="match status" value="1"/>
</dbReference>
<dbReference type="Pfam" id="PF00069">
    <property type="entry name" value="Pkinase"/>
    <property type="match status" value="1"/>
</dbReference>
<dbReference type="PRINTS" id="PR00019">
    <property type="entry name" value="LEURICHRPT"/>
</dbReference>
<dbReference type="SMART" id="SM00365">
    <property type="entry name" value="LRR_SD22"/>
    <property type="match status" value="7"/>
</dbReference>
<dbReference type="SMART" id="SM00369">
    <property type="entry name" value="LRR_TYP"/>
    <property type="match status" value="9"/>
</dbReference>
<dbReference type="SUPFAM" id="SSF52058">
    <property type="entry name" value="L domain-like"/>
    <property type="match status" value="1"/>
</dbReference>
<dbReference type="SUPFAM" id="SSF56112">
    <property type="entry name" value="Protein kinase-like (PK-like)"/>
    <property type="match status" value="1"/>
</dbReference>
<dbReference type="SUPFAM" id="SSF52047">
    <property type="entry name" value="RNI-like"/>
    <property type="match status" value="1"/>
</dbReference>
<dbReference type="PROSITE" id="PS51450">
    <property type="entry name" value="LRR"/>
    <property type="match status" value="16"/>
</dbReference>
<dbReference type="PROSITE" id="PS00107">
    <property type="entry name" value="PROTEIN_KINASE_ATP"/>
    <property type="match status" value="1"/>
</dbReference>
<dbReference type="PROSITE" id="PS50011">
    <property type="entry name" value="PROTEIN_KINASE_DOM"/>
    <property type="match status" value="1"/>
</dbReference>
<dbReference type="PROSITE" id="PS00109">
    <property type="entry name" value="PROTEIN_KINASE_TYR"/>
    <property type="match status" value="1"/>
</dbReference>
<reference key="1">
    <citation type="journal article" date="1999" name="Nature">
        <title>Sequence and analysis of chromosome 4 of the plant Arabidopsis thaliana.</title>
        <authorList>
            <person name="Mayer K.F.X."/>
            <person name="Schueller C."/>
            <person name="Wambutt R."/>
            <person name="Murphy G."/>
            <person name="Volckaert G."/>
            <person name="Pohl T."/>
            <person name="Duesterhoeft A."/>
            <person name="Stiekema W."/>
            <person name="Entian K.-D."/>
            <person name="Terryn N."/>
            <person name="Harris B."/>
            <person name="Ansorge W."/>
            <person name="Brandt P."/>
            <person name="Grivell L.A."/>
            <person name="Rieger M."/>
            <person name="Weichselgartner M."/>
            <person name="de Simone V."/>
            <person name="Obermaier B."/>
            <person name="Mache R."/>
            <person name="Mueller M."/>
            <person name="Kreis M."/>
            <person name="Delseny M."/>
            <person name="Puigdomenech P."/>
            <person name="Watson M."/>
            <person name="Schmidtheini T."/>
            <person name="Reichert B."/>
            <person name="Portetelle D."/>
            <person name="Perez-Alonso M."/>
            <person name="Boutry M."/>
            <person name="Bancroft I."/>
            <person name="Vos P."/>
            <person name="Hoheisel J."/>
            <person name="Zimmermann W."/>
            <person name="Wedler H."/>
            <person name="Ridley P."/>
            <person name="Langham S.-A."/>
            <person name="McCullagh B."/>
            <person name="Bilham L."/>
            <person name="Robben J."/>
            <person name="van der Schueren J."/>
            <person name="Grymonprez B."/>
            <person name="Chuang Y.-J."/>
            <person name="Vandenbussche F."/>
            <person name="Braeken M."/>
            <person name="Weltjens I."/>
            <person name="Voet M."/>
            <person name="Bastiaens I."/>
            <person name="Aert R."/>
            <person name="Defoor E."/>
            <person name="Weitzenegger T."/>
            <person name="Bothe G."/>
            <person name="Ramsperger U."/>
            <person name="Hilbert H."/>
            <person name="Braun M."/>
            <person name="Holzer E."/>
            <person name="Brandt A."/>
            <person name="Peters S."/>
            <person name="van Staveren M."/>
            <person name="Dirkse W."/>
            <person name="Mooijman P."/>
            <person name="Klein Lankhorst R."/>
            <person name="Rose M."/>
            <person name="Hauf J."/>
            <person name="Koetter P."/>
            <person name="Berneiser S."/>
            <person name="Hempel S."/>
            <person name="Feldpausch M."/>
            <person name="Lamberth S."/>
            <person name="Van den Daele H."/>
            <person name="De Keyser A."/>
            <person name="Buysshaert C."/>
            <person name="Gielen J."/>
            <person name="Villarroel R."/>
            <person name="De Clercq R."/>
            <person name="van Montagu M."/>
            <person name="Rogers J."/>
            <person name="Cronin A."/>
            <person name="Quail M.A."/>
            <person name="Bray-Allen S."/>
            <person name="Clark L."/>
            <person name="Doggett J."/>
            <person name="Hall S."/>
            <person name="Kay M."/>
            <person name="Lennard N."/>
            <person name="McLay K."/>
            <person name="Mayes R."/>
            <person name="Pettett A."/>
            <person name="Rajandream M.A."/>
            <person name="Lyne M."/>
            <person name="Benes V."/>
            <person name="Rechmann S."/>
            <person name="Borkova D."/>
            <person name="Bloecker H."/>
            <person name="Scharfe M."/>
            <person name="Grimm M."/>
            <person name="Loehnert T.-H."/>
            <person name="Dose S."/>
            <person name="de Haan M."/>
            <person name="Maarse A.C."/>
            <person name="Schaefer M."/>
            <person name="Mueller-Auer S."/>
            <person name="Gabel C."/>
            <person name="Fuchs M."/>
            <person name="Fartmann B."/>
            <person name="Granderath K."/>
            <person name="Dauner D."/>
            <person name="Herzl A."/>
            <person name="Neumann S."/>
            <person name="Argiriou A."/>
            <person name="Vitale D."/>
            <person name="Liguori R."/>
            <person name="Piravandi E."/>
            <person name="Massenet O."/>
            <person name="Quigley F."/>
            <person name="Clabauld G."/>
            <person name="Muendlein A."/>
            <person name="Felber R."/>
            <person name="Schnabl S."/>
            <person name="Hiller R."/>
            <person name="Schmidt W."/>
            <person name="Lecharny A."/>
            <person name="Aubourg S."/>
            <person name="Chefdor F."/>
            <person name="Cooke R."/>
            <person name="Berger C."/>
            <person name="Monfort A."/>
            <person name="Casacuberta E."/>
            <person name="Gibbons T."/>
            <person name="Weber N."/>
            <person name="Vandenbol M."/>
            <person name="Bargues M."/>
            <person name="Terol J."/>
            <person name="Torres A."/>
            <person name="Perez-Perez A."/>
            <person name="Purnelle B."/>
            <person name="Bent E."/>
            <person name="Johnson S."/>
            <person name="Tacon D."/>
            <person name="Jesse T."/>
            <person name="Heijnen L."/>
            <person name="Schwarz S."/>
            <person name="Scholler P."/>
            <person name="Heber S."/>
            <person name="Francs P."/>
            <person name="Bielke C."/>
            <person name="Frishman D."/>
            <person name="Haase D."/>
            <person name="Lemcke K."/>
            <person name="Mewes H.-W."/>
            <person name="Stocker S."/>
            <person name="Zaccaria P."/>
            <person name="Bevan M."/>
            <person name="Wilson R.K."/>
            <person name="de la Bastide M."/>
            <person name="Habermann K."/>
            <person name="Parnell L."/>
            <person name="Dedhia N."/>
            <person name="Gnoj L."/>
            <person name="Schutz K."/>
            <person name="Huang E."/>
            <person name="Spiegel L."/>
            <person name="Sekhon M."/>
            <person name="Murray J."/>
            <person name="Sheet P."/>
            <person name="Cordes M."/>
            <person name="Abu-Threideh J."/>
            <person name="Stoneking T."/>
            <person name="Kalicki J."/>
            <person name="Graves T."/>
            <person name="Harmon G."/>
            <person name="Edwards J."/>
            <person name="Latreille P."/>
            <person name="Courtney L."/>
            <person name="Cloud J."/>
            <person name="Abbott A."/>
            <person name="Scott K."/>
            <person name="Johnson D."/>
            <person name="Minx P."/>
            <person name="Bentley D."/>
            <person name="Fulton B."/>
            <person name="Miller N."/>
            <person name="Greco T."/>
            <person name="Kemp K."/>
            <person name="Kramer J."/>
            <person name="Fulton L."/>
            <person name="Mardis E."/>
            <person name="Dante M."/>
            <person name="Pepin K."/>
            <person name="Hillier L.W."/>
            <person name="Nelson J."/>
            <person name="Spieth J."/>
            <person name="Ryan E."/>
            <person name="Andrews S."/>
            <person name="Geisel C."/>
            <person name="Layman D."/>
            <person name="Du H."/>
            <person name="Ali J."/>
            <person name="Berghoff A."/>
            <person name="Jones K."/>
            <person name="Drone K."/>
            <person name="Cotton M."/>
            <person name="Joshu C."/>
            <person name="Antonoiu B."/>
            <person name="Zidanic M."/>
            <person name="Strong C."/>
            <person name="Sun H."/>
            <person name="Lamar B."/>
            <person name="Yordan C."/>
            <person name="Ma P."/>
            <person name="Zhong J."/>
            <person name="Preston R."/>
            <person name="Vil D."/>
            <person name="Shekher M."/>
            <person name="Matero A."/>
            <person name="Shah R."/>
            <person name="Swaby I.K."/>
            <person name="O'Shaughnessy A."/>
            <person name="Rodriguez M."/>
            <person name="Hoffman J."/>
            <person name="Till S."/>
            <person name="Granat S."/>
            <person name="Shohdy N."/>
            <person name="Hasegawa A."/>
            <person name="Hameed A."/>
            <person name="Lodhi M."/>
            <person name="Johnson A."/>
            <person name="Chen E."/>
            <person name="Marra M.A."/>
            <person name="Martienssen R."/>
            <person name="McCombie W.R."/>
        </authorList>
    </citation>
    <scope>NUCLEOTIDE SEQUENCE [LARGE SCALE GENOMIC DNA]</scope>
    <source>
        <strain>cv. Columbia</strain>
    </source>
</reference>
<reference key="2">
    <citation type="journal article" date="2017" name="Plant J.">
        <title>Araport11: a complete reannotation of the Arabidopsis thaliana reference genome.</title>
        <authorList>
            <person name="Cheng C.Y."/>
            <person name="Krishnakumar V."/>
            <person name="Chan A.P."/>
            <person name="Thibaud-Nissen F."/>
            <person name="Schobel S."/>
            <person name="Town C.D."/>
        </authorList>
    </citation>
    <scope>GENOME REANNOTATION</scope>
    <source>
        <strain>cv. Columbia</strain>
    </source>
</reference>
<reference key="3">
    <citation type="journal article" date="2003" name="Science">
        <title>Empirical analysis of transcriptional activity in the Arabidopsis genome.</title>
        <authorList>
            <person name="Yamada K."/>
            <person name="Lim J."/>
            <person name="Dale J.M."/>
            <person name="Chen H."/>
            <person name="Shinn P."/>
            <person name="Palm C.J."/>
            <person name="Southwick A.M."/>
            <person name="Wu H.C."/>
            <person name="Kim C.J."/>
            <person name="Nguyen M."/>
            <person name="Pham P.K."/>
            <person name="Cheuk R.F."/>
            <person name="Karlin-Newmann G."/>
            <person name="Liu S.X."/>
            <person name="Lam B."/>
            <person name="Sakano H."/>
            <person name="Wu T."/>
            <person name="Yu G."/>
            <person name="Miranda M."/>
            <person name="Quach H.L."/>
            <person name="Tripp M."/>
            <person name="Chang C.H."/>
            <person name="Lee J.M."/>
            <person name="Toriumi M.J."/>
            <person name="Chan M.M."/>
            <person name="Tang C.C."/>
            <person name="Onodera C.S."/>
            <person name="Deng J.M."/>
            <person name="Akiyama K."/>
            <person name="Ansari Y."/>
            <person name="Arakawa T."/>
            <person name="Banh J."/>
            <person name="Banno F."/>
            <person name="Bowser L."/>
            <person name="Brooks S.Y."/>
            <person name="Carninci P."/>
            <person name="Chao Q."/>
            <person name="Choy N."/>
            <person name="Enju A."/>
            <person name="Goldsmith A.D."/>
            <person name="Gurjal M."/>
            <person name="Hansen N.F."/>
            <person name="Hayashizaki Y."/>
            <person name="Johnson-Hopson C."/>
            <person name="Hsuan V.W."/>
            <person name="Iida K."/>
            <person name="Karnes M."/>
            <person name="Khan S."/>
            <person name="Koesema E."/>
            <person name="Ishida J."/>
            <person name="Jiang P.X."/>
            <person name="Jones T."/>
            <person name="Kawai J."/>
            <person name="Kamiya A."/>
            <person name="Meyers C."/>
            <person name="Nakajima M."/>
            <person name="Narusaka M."/>
            <person name="Seki M."/>
            <person name="Sakurai T."/>
            <person name="Satou M."/>
            <person name="Tamse R."/>
            <person name="Vaysberg M."/>
            <person name="Wallender E.K."/>
            <person name="Wong C."/>
            <person name="Yamamura Y."/>
            <person name="Yuan S."/>
            <person name="Shinozaki K."/>
            <person name="Davis R.W."/>
            <person name="Theologis A."/>
            <person name="Ecker J.R."/>
        </authorList>
    </citation>
    <scope>NUCLEOTIDE SEQUENCE [LARGE SCALE MRNA] (ISOFORM 1)</scope>
    <source>
        <strain>cv. Columbia</strain>
    </source>
</reference>
<reference key="4">
    <citation type="journal article" date="2009" name="DNA Res.">
        <title>Analysis of multiple occurrences of alternative splicing events in Arabidopsis thaliana using novel sequenced full-length cDNAs.</title>
        <authorList>
            <person name="Iida K."/>
            <person name="Fukami-Kobayashi K."/>
            <person name="Toyoda A."/>
            <person name="Sakaki Y."/>
            <person name="Kobayashi M."/>
            <person name="Seki M."/>
            <person name="Shinozaki K."/>
        </authorList>
    </citation>
    <scope>NUCLEOTIDE SEQUENCE [LARGE SCALE MRNA] (ISOFORM 2)</scope>
    <source>
        <strain>cv. Columbia</strain>
    </source>
</reference>
<reference key="5">
    <citation type="journal article" date="2010" name="BMC Genomics">
        <title>Genome-wide cloning and sequence analysis of leucine-rich repeat receptor-like protein kinase genes in Arabidopsis thaliana.</title>
        <authorList>
            <person name="Gou X."/>
            <person name="He K."/>
            <person name="Yang H."/>
            <person name="Yuan T."/>
            <person name="Lin H."/>
            <person name="Clouse S.D."/>
            <person name="Li J."/>
        </authorList>
    </citation>
    <scope>NUCLEOTIDE SEQUENCE [LARGE SCALE MRNA] (ISOFORM 1)</scope>
    <source>
        <strain>cv. Columbia</strain>
    </source>
</reference>
<reference key="6">
    <citation type="submission" date="1998-08" db="EMBL/GenBank/DDBJ databases">
        <title>Signal peptide selection derived cDNAs from Arabidopsis thaliana leaves and guard cells.</title>
        <authorList>
            <person name="Stracke R."/>
            <person name="Palme K."/>
        </authorList>
    </citation>
    <scope>NUCLEOTIDE SEQUENCE [LARGE SCALE MRNA] OF 9-159 (ISOFORMS 1 AND 2)</scope>
</reference>
<reference key="7">
    <citation type="journal article" date="2004" name="Plant Cell">
        <title>Phosphoproteomics of the Arabidopsis plasma membrane and a new phosphorylation site database.</title>
        <authorList>
            <person name="Nuehse T.S."/>
            <person name="Stensballe A."/>
            <person name="Jensen O.N."/>
            <person name="Peck S.C."/>
        </authorList>
    </citation>
    <scope>SUBCELLULAR LOCATION</scope>
</reference>
<reference key="8">
    <citation type="journal article" date="2007" name="Mol. Cell. Proteomics">
        <title>A high content in lipid-modified peripheral proteins and integral receptor kinases features in the arabidopsis plasma membrane proteome.</title>
        <authorList>
            <person name="Marmagne A."/>
            <person name="Ferro M."/>
            <person name="Meinnel T."/>
            <person name="Bruley C."/>
            <person name="Kuhn L."/>
            <person name="Garin J."/>
            <person name="Barbier-Brygoo H."/>
            <person name="Ephritikhine G."/>
        </authorList>
    </citation>
    <scope>IDENTIFICATION BY MASS SPECTROMETRY</scope>
    <scope>SUBCELLULAR LOCATION [LARGE SCALE ANALYSIS]</scope>
</reference>
<reference key="9">
    <citation type="journal article" date="2016" name="Nature">
        <title>A receptor heteromer mediates the male perception of female attractants in plants.</title>
        <authorList>
            <person name="Wang T."/>
            <person name="Liang L."/>
            <person name="Xue Y."/>
            <person name="Jia P.F."/>
            <person name="Chen W."/>
            <person name="Zhang M.X."/>
            <person name="Wang Y.C."/>
            <person name="Li H.J."/>
            <person name="Yang W.C."/>
        </authorList>
    </citation>
    <scope>FUNCTION</scope>
    <scope>INTERACTION WITH MDIS1 AND LURE1.2</scope>
    <scope>TISSUE SPECIFICITY</scope>
</reference>
<reference key="10">
    <citation type="journal article" date="2021" name="Nat. Commun.">
        <title>Perception of a divergent family of phytocytokines by the Arabidopsis receptor kinase MIK2.</title>
        <authorList>
            <person name="Rhodes J."/>
            <person name="Yang H."/>
            <person name="Moussu S."/>
            <person name="Boutrot F."/>
            <person name="Santiago J."/>
            <person name="Zipfel C."/>
        </authorList>
    </citation>
    <scope>FUNCTION</scope>
    <scope>DISRUPTION PHENOTYPE</scope>
    <scope>INTERACTION WITH SCOOP12</scope>
    <source>
        <strain>cv. Columbia</strain>
        <strain>cv. Wassilewskija-2</strain>
    </source>
</reference>
<reference key="11">
    <citation type="journal article" date="2021" name="Nat. Commun.">
        <title>The Arabidopsis MIK2 receptor elicits immunity by sensing a conserved signature from phytocytokines and microbes.</title>
        <authorList>
            <person name="Hou S."/>
            <person name="Liu D."/>
            <person name="Huang S."/>
            <person name="Luo D."/>
            <person name="Liu Z."/>
            <person name="Xiang Q."/>
            <person name="Wang P."/>
            <person name="Mu R."/>
            <person name="Han Z."/>
            <person name="Chen S."/>
            <person name="Chai J."/>
            <person name="Shan L."/>
            <person name="He P."/>
        </authorList>
    </citation>
    <scope>FUNCTION</scope>
    <scope>DISRUPTION PHENOTYPE</scope>
    <scope>INTERACTION WITH SCOOP12</scope>
    <scope>INDUCTION BY FLG22 AND ELF18</scope>
    <source>
        <strain>cv. Columbia</strain>
    </source>
</reference>
<reference key="12">
    <citation type="journal article" date="2022" name="Front. Plant Sci.">
        <title>The MIK2/SCOOP signaling system contributes to Arabidopsis resistance against herbivory by modulating jasmonate and indole glucosinolate biosynthesis.</title>
        <authorList>
            <person name="Stahl E."/>
            <person name="Fernandez Martin A."/>
            <person name="Glauser G."/>
            <person name="Guillou M.-C."/>
            <person name="Aubourg S."/>
            <person name="Renou J.-P."/>
            <person name="Reymond P."/>
        </authorList>
    </citation>
    <scope>FUNCTION</scope>
    <scope>DISRUPTION PHENOTYPE</scope>
    <source>
        <strain>cv. Columbia</strain>
        <strain>cv. Wassilewskija</strain>
    </source>
</reference>
<evidence type="ECO:0000250" key="1">
    <source>
        <dbReference type="UniProtKB" id="C0LGT6"/>
    </source>
</evidence>
<evidence type="ECO:0000250" key="2">
    <source>
        <dbReference type="UniProtKB" id="O22476"/>
    </source>
</evidence>
<evidence type="ECO:0000250" key="3">
    <source>
        <dbReference type="UniProtKB" id="Q9M0G7"/>
    </source>
</evidence>
<evidence type="ECO:0000255" key="4"/>
<evidence type="ECO:0000255" key="5">
    <source>
        <dbReference type="PROSITE-ProRule" id="PRU00159"/>
    </source>
</evidence>
<evidence type="ECO:0000255" key="6">
    <source>
        <dbReference type="PROSITE-ProRule" id="PRU10028"/>
    </source>
</evidence>
<evidence type="ECO:0000269" key="7">
    <source>
    </source>
</evidence>
<evidence type="ECO:0000269" key="8">
    <source>
    </source>
</evidence>
<evidence type="ECO:0000269" key="9">
    <source>
    </source>
</evidence>
<evidence type="ECO:0000269" key="10">
    <source>
    </source>
</evidence>
<evidence type="ECO:0000269" key="11">
    <source>
    </source>
</evidence>
<evidence type="ECO:0000303" key="12">
    <source>
    </source>
</evidence>
<evidence type="ECO:0000303" key="13">
    <source>
    </source>
</evidence>
<evidence type="ECO:0000303" key="14">
    <source ref="6"/>
</evidence>
<evidence type="ECO:0000305" key="15"/>
<evidence type="ECO:0000305" key="16">
    <source>
    </source>
</evidence>
<evidence type="ECO:0000312" key="17">
    <source>
        <dbReference type="Araport" id="AT4G08850"/>
    </source>
</evidence>
<evidence type="ECO:0000312" key="18">
    <source>
        <dbReference type="EMBL" id="CAB82121.1"/>
    </source>
</evidence>
<evidence type="ECO:0007829" key="19">
    <source>
        <dbReference type="PDB" id="8WEB"/>
    </source>
</evidence>
<evidence type="ECO:0007829" key="20">
    <source>
        <dbReference type="PDB" id="8WEC"/>
    </source>
</evidence>
<evidence type="ECO:0007829" key="21">
    <source>
        <dbReference type="PDB" id="8WEE"/>
    </source>
</evidence>
<evidence type="ECO:0007829" key="22">
    <source>
        <dbReference type="PDB" id="8YAA"/>
    </source>
</evidence>
<organism>
    <name type="scientific">Arabidopsis thaliana</name>
    <name type="common">Mouse-ear cress</name>
    <dbReference type="NCBI Taxonomy" id="3702"/>
    <lineage>
        <taxon>Eukaryota</taxon>
        <taxon>Viridiplantae</taxon>
        <taxon>Streptophyta</taxon>
        <taxon>Embryophyta</taxon>
        <taxon>Tracheophyta</taxon>
        <taxon>Spermatophyta</taxon>
        <taxon>Magnoliopsida</taxon>
        <taxon>eudicotyledons</taxon>
        <taxon>Gunneridae</taxon>
        <taxon>Pentapetalae</taxon>
        <taxon>rosids</taxon>
        <taxon>malvids</taxon>
        <taxon>Brassicales</taxon>
        <taxon>Brassicaceae</taxon>
        <taxon>Camelineae</taxon>
        <taxon>Arabidopsis</taxon>
    </lineage>
</organism>
<feature type="signal peptide" evidence="4">
    <location>
        <begin position="1"/>
        <end position="43"/>
    </location>
</feature>
<feature type="chain" id="PRO_0000387559" description="MDIS1-interacting receptor like kinase 2">
    <location>
        <begin position="44"/>
        <end position="1045"/>
    </location>
</feature>
<feature type="topological domain" description="Extracellular" evidence="4">
    <location>
        <begin position="44"/>
        <end position="709"/>
    </location>
</feature>
<feature type="transmembrane region" description="Helical" evidence="4">
    <location>
        <begin position="710"/>
        <end position="730"/>
    </location>
</feature>
<feature type="topological domain" description="Cytoplasmic" evidence="4">
    <location>
        <begin position="731"/>
        <end position="1045"/>
    </location>
</feature>
<feature type="repeat" description="LRR 1" evidence="4">
    <location>
        <begin position="92"/>
        <end position="116"/>
    </location>
</feature>
<feature type="repeat" description="LRR 2" evidence="4">
    <location>
        <begin position="117"/>
        <end position="140"/>
    </location>
</feature>
<feature type="repeat" description="LRR 3" evidence="4">
    <location>
        <begin position="141"/>
        <end position="165"/>
    </location>
</feature>
<feature type="repeat" description="LRR 4" evidence="4">
    <location>
        <begin position="166"/>
        <end position="189"/>
    </location>
</feature>
<feature type="repeat" description="LRR 5" evidence="4">
    <location>
        <begin position="191"/>
        <end position="212"/>
    </location>
</feature>
<feature type="repeat" description="LRR 6" evidence="4">
    <location>
        <begin position="213"/>
        <end position="237"/>
    </location>
</feature>
<feature type="repeat" description="LRR 7" evidence="4">
    <location>
        <begin position="238"/>
        <end position="260"/>
    </location>
</feature>
<feature type="repeat" description="LRR 8" evidence="4">
    <location>
        <begin position="262"/>
        <end position="285"/>
    </location>
</feature>
<feature type="repeat" description="LRR 9" evidence="4">
    <location>
        <begin position="286"/>
        <end position="309"/>
    </location>
</feature>
<feature type="repeat" description="LRR 10" evidence="4">
    <location>
        <begin position="311"/>
        <end position="333"/>
    </location>
</feature>
<feature type="repeat" description="LRR 11" evidence="4">
    <location>
        <begin position="334"/>
        <end position="356"/>
    </location>
</feature>
<feature type="repeat" description="LRR 12" evidence="4">
    <location>
        <begin position="357"/>
        <end position="381"/>
    </location>
</feature>
<feature type="repeat" description="LRR 13" evidence="4">
    <location>
        <begin position="383"/>
        <end position="405"/>
    </location>
</feature>
<feature type="repeat" description="LRR 14" evidence="4">
    <location>
        <begin position="406"/>
        <end position="429"/>
    </location>
</feature>
<feature type="repeat" description="LRR 15" evidence="4">
    <location>
        <begin position="431"/>
        <end position="452"/>
    </location>
</feature>
<feature type="repeat" description="LRR 16" evidence="4">
    <location>
        <begin position="453"/>
        <end position="476"/>
    </location>
</feature>
<feature type="repeat" description="LRR 17" evidence="4">
    <location>
        <begin position="477"/>
        <end position="501"/>
    </location>
</feature>
<feature type="repeat" description="LRR 18" evidence="4">
    <location>
        <begin position="502"/>
        <end position="525"/>
    </location>
</feature>
<feature type="repeat" description="LRR 19" evidence="4">
    <location>
        <begin position="527"/>
        <end position="549"/>
    </location>
</feature>
<feature type="repeat" description="LRR 20" evidence="4">
    <location>
        <begin position="550"/>
        <end position="573"/>
    </location>
</feature>
<feature type="repeat" description="LRR 21" evidence="4">
    <location>
        <begin position="575"/>
        <end position="597"/>
    </location>
</feature>
<feature type="repeat" description="LRR 22" evidence="4">
    <location>
        <begin position="598"/>
        <end position="620"/>
    </location>
</feature>
<feature type="repeat" description="LRR 23" evidence="4">
    <location>
        <begin position="621"/>
        <end position="644"/>
    </location>
</feature>
<feature type="repeat" description="LRR 24" evidence="4">
    <location>
        <begin position="646"/>
        <end position="670"/>
    </location>
</feature>
<feature type="domain" description="Protein kinase" evidence="5">
    <location>
        <begin position="775"/>
        <end position="1045"/>
    </location>
</feature>
<feature type="active site" description="Proton acceptor" evidence="5 6">
    <location>
        <position position="905"/>
    </location>
</feature>
<feature type="binding site" evidence="5">
    <location>
        <begin position="781"/>
        <end position="789"/>
    </location>
    <ligand>
        <name>ATP</name>
        <dbReference type="ChEBI" id="CHEBI:30616"/>
    </ligand>
</feature>
<feature type="binding site" evidence="5">
    <location>
        <position position="802"/>
    </location>
    <ligand>
        <name>ATP</name>
        <dbReference type="ChEBI" id="CHEBI:30616"/>
    </ligand>
</feature>
<feature type="modified residue" description="Phosphothreonine" evidence="2">
    <location>
        <position position="772"/>
    </location>
</feature>
<feature type="modified residue" description="Phosphotyrosine" evidence="2">
    <location>
        <position position="853"/>
    </location>
</feature>
<feature type="modified residue" description="Phosphotyrosine" evidence="1">
    <location>
        <position position="892"/>
    </location>
</feature>
<feature type="modified residue" description="Phosphoserine" evidence="3">
    <location>
        <position position="938"/>
    </location>
</feature>
<feature type="modified residue" description="Phosphotyrosine" evidence="1">
    <location>
        <position position="946"/>
    </location>
</feature>
<feature type="modified residue" description="Phosphotyrosine" evidence="3">
    <location>
        <position position="953"/>
    </location>
</feature>
<feature type="glycosylation site" description="N-linked (GlcNAc...) asparagine" evidence="4">
    <location>
        <position position="63"/>
    </location>
</feature>
<feature type="glycosylation site" description="N-linked (GlcNAc...) asparagine" evidence="4">
    <location>
        <position position="77"/>
    </location>
</feature>
<feature type="glycosylation site" description="N-linked (GlcNAc...) asparagine" evidence="4">
    <location>
        <position position="99"/>
    </location>
</feature>
<feature type="glycosylation site" description="N-linked (GlcNAc...) asparagine" evidence="4">
    <location>
        <position position="119"/>
    </location>
</feature>
<feature type="glycosylation site" description="N-linked (GlcNAc...) asparagine" evidence="4">
    <location>
        <position position="179"/>
    </location>
</feature>
<feature type="glycosylation site" description="N-linked (GlcNAc...) asparagine" evidence="4">
    <location>
        <position position="212"/>
    </location>
</feature>
<feature type="glycosylation site" description="N-linked (GlcNAc...) asparagine" evidence="4">
    <location>
        <position position="249"/>
    </location>
</feature>
<feature type="glycosylation site" description="N-linked (GlcNAc...) asparagine" evidence="4">
    <location>
        <position position="263"/>
    </location>
</feature>
<feature type="glycosylation site" description="N-linked (GlcNAc...) asparagine" evidence="4">
    <location>
        <position position="284"/>
    </location>
</feature>
<feature type="glycosylation site" description="N-linked (GlcNAc...) asparagine" evidence="4">
    <location>
        <position position="323"/>
    </location>
</feature>
<feature type="glycosylation site" description="N-linked (GlcNAc...) asparagine" evidence="4">
    <location>
        <position position="380"/>
    </location>
</feature>
<feature type="glycosylation site" description="N-linked (GlcNAc...) asparagine" evidence="4">
    <location>
        <position position="393"/>
    </location>
</feature>
<feature type="glycosylation site" description="N-linked (GlcNAc...) asparagine" evidence="4">
    <location>
        <position position="410"/>
    </location>
</feature>
<feature type="glycosylation site" description="N-linked (GlcNAc...) asparagine" evidence="4">
    <location>
        <position position="487"/>
    </location>
</feature>
<feature type="glycosylation site" description="N-linked (GlcNAc...) asparagine" evidence="4">
    <location>
        <position position="500"/>
    </location>
</feature>
<feature type="glycosylation site" description="N-linked (GlcNAc...) asparagine" evidence="4">
    <location>
        <position position="580"/>
    </location>
</feature>
<feature type="glycosylation site" description="N-linked (GlcNAc...) asparagine" evidence="4">
    <location>
        <position position="633"/>
    </location>
</feature>
<feature type="glycosylation site" description="N-linked (GlcNAc...) asparagine" evidence="4">
    <location>
        <position position="687"/>
    </location>
</feature>
<feature type="splice variant" id="VSP_038295" description="In isoform 2." evidence="12 14">
    <original>ELAYAMKVTEKCDVYSFGVLTLEVIKGEHPGDLVSTLSSSPPDATLSLKSISDHRLPEPTPEIKEEVLEILKVALLCLHSDPQARPTMLSISTAFS</original>
    <variation>GTLFDPLDKLVVDLTRLWSGRVEIMVRFGLFGLNFNQIKTKMFCFGLKFFLTMGWIWFSF</variation>
    <location>
        <begin position="950"/>
        <end position="1045"/>
    </location>
</feature>
<feature type="sequence conflict" description="In Ref. 6; AAN60259." evidence="15" ref="6">
    <original>I</original>
    <variation>S</variation>
    <location>
        <position position="10"/>
    </location>
</feature>
<feature type="sequence conflict" description="In Ref. 6; AAN60259." evidence="15" ref="6">
    <original>D</original>
    <variation>N</variation>
    <location>
        <position position="111"/>
    </location>
</feature>
<feature type="sequence conflict" description="In Ref. 1; CAB78010/CAB82121." evidence="15" ref="1">
    <original>L</original>
    <variation>V</variation>
    <location>
        <position position="389"/>
    </location>
</feature>
<feature type="turn" evidence="22">
    <location>
        <begin position="44"/>
        <end position="46"/>
    </location>
</feature>
<feature type="helix" evidence="19">
    <location>
        <begin position="48"/>
        <end position="59"/>
    </location>
</feature>
<feature type="strand" evidence="19">
    <location>
        <begin position="66"/>
        <end position="68"/>
    </location>
</feature>
<feature type="helix" evidence="19">
    <location>
        <begin position="69"/>
        <end position="72"/>
    </location>
</feature>
<feature type="turn" evidence="19">
    <location>
        <begin position="78"/>
        <end position="84"/>
    </location>
</feature>
<feature type="strand" evidence="19">
    <location>
        <begin position="88"/>
        <end position="91"/>
    </location>
</feature>
<feature type="strand" evidence="19">
    <location>
        <begin position="94"/>
        <end position="99"/>
    </location>
</feature>
<feature type="strand" evidence="19">
    <location>
        <begin position="106"/>
        <end position="109"/>
    </location>
</feature>
<feature type="helix" evidence="19">
    <location>
        <begin position="114"/>
        <end position="116"/>
    </location>
</feature>
<feature type="strand" evidence="19">
    <location>
        <begin position="122"/>
        <end position="124"/>
    </location>
</feature>
<feature type="strand" evidence="19">
    <location>
        <begin position="127"/>
        <end position="132"/>
    </location>
</feature>
<feature type="helix" evidence="19">
    <location>
        <begin position="136"/>
        <end position="140"/>
    </location>
</feature>
<feature type="strand" evidence="19">
    <location>
        <begin position="146"/>
        <end position="148"/>
    </location>
</feature>
<feature type="strand" evidence="19">
    <location>
        <begin position="151"/>
        <end position="157"/>
    </location>
</feature>
<feature type="helix" evidence="19">
    <location>
        <begin position="160"/>
        <end position="164"/>
    </location>
</feature>
<feature type="strand" evidence="19">
    <location>
        <begin position="169"/>
        <end position="172"/>
    </location>
</feature>
<feature type="strand" evidence="19">
    <location>
        <begin position="175"/>
        <end position="181"/>
    </location>
</feature>
<feature type="helix" evidence="19">
    <location>
        <begin position="184"/>
        <end position="188"/>
    </location>
</feature>
<feature type="strand" evidence="19">
    <location>
        <begin position="194"/>
        <end position="196"/>
    </location>
</feature>
<feature type="strand" evidence="20">
    <location>
        <begin position="199"/>
        <end position="204"/>
    </location>
</feature>
<feature type="helix" evidence="19">
    <location>
        <begin position="208"/>
        <end position="212"/>
    </location>
</feature>
<feature type="strand" evidence="19">
    <location>
        <begin position="218"/>
        <end position="220"/>
    </location>
</feature>
<feature type="strand" evidence="20">
    <location>
        <begin position="223"/>
        <end position="228"/>
    </location>
</feature>
<feature type="helix" evidence="19">
    <location>
        <begin position="232"/>
        <end position="236"/>
    </location>
</feature>
<feature type="strand" evidence="19">
    <location>
        <begin position="242"/>
        <end position="244"/>
    </location>
</feature>
<feature type="strand" evidence="20">
    <location>
        <begin position="247"/>
        <end position="250"/>
    </location>
</feature>
<feature type="helix" evidence="19">
    <location>
        <begin position="256"/>
        <end position="260"/>
    </location>
</feature>
<feature type="strand" evidence="19">
    <location>
        <begin position="266"/>
        <end position="268"/>
    </location>
</feature>
<feature type="strand" evidence="22">
    <location>
        <begin position="271"/>
        <end position="274"/>
    </location>
</feature>
<feature type="helix" evidence="19">
    <location>
        <begin position="280"/>
        <end position="284"/>
    </location>
</feature>
<feature type="strand" evidence="19">
    <location>
        <begin position="289"/>
        <end position="292"/>
    </location>
</feature>
<feature type="strand" evidence="21">
    <location>
        <begin position="295"/>
        <end position="301"/>
    </location>
</feature>
<feature type="helix" evidence="19">
    <location>
        <begin position="304"/>
        <end position="308"/>
    </location>
</feature>
<feature type="strand" evidence="19">
    <location>
        <begin position="314"/>
        <end position="316"/>
    </location>
</feature>
<feature type="strand" evidence="19">
    <location>
        <begin position="319"/>
        <end position="322"/>
    </location>
</feature>
<feature type="helix" evidence="19">
    <location>
        <begin position="328"/>
        <end position="332"/>
    </location>
</feature>
<feature type="strand" evidence="19">
    <location>
        <begin position="338"/>
        <end position="340"/>
    </location>
</feature>
<feature type="strand" evidence="21">
    <location>
        <begin position="343"/>
        <end position="348"/>
    </location>
</feature>
<feature type="helix" evidence="19">
    <location>
        <begin position="352"/>
        <end position="356"/>
    </location>
</feature>
<feature type="strand" evidence="19">
    <location>
        <begin position="362"/>
        <end position="364"/>
    </location>
</feature>
<feature type="strand" evidence="19">
    <location>
        <begin position="367"/>
        <end position="373"/>
    </location>
</feature>
<feature type="helix" evidence="19">
    <location>
        <begin position="376"/>
        <end position="379"/>
    </location>
</feature>
<feature type="strand" evidence="19">
    <location>
        <begin position="386"/>
        <end position="388"/>
    </location>
</feature>
<feature type="strand" evidence="19">
    <location>
        <begin position="391"/>
        <end position="396"/>
    </location>
</feature>
<feature type="turn" evidence="19">
    <location>
        <begin position="400"/>
        <end position="405"/>
    </location>
</feature>
<feature type="strand" evidence="19">
    <location>
        <begin position="410"/>
        <end position="412"/>
    </location>
</feature>
<feature type="strand" evidence="19">
    <location>
        <begin position="416"/>
        <end position="421"/>
    </location>
</feature>
<feature type="helix" evidence="19">
    <location>
        <begin position="424"/>
        <end position="427"/>
    </location>
</feature>
<feature type="strand" evidence="19">
    <location>
        <begin position="434"/>
        <end position="436"/>
    </location>
</feature>
<feature type="strand" evidence="19">
    <location>
        <begin position="440"/>
        <end position="445"/>
    </location>
</feature>
<feature type="helix" evidence="19">
    <location>
        <begin position="446"/>
        <end position="449"/>
    </location>
</feature>
<feature type="strand" evidence="19">
    <location>
        <begin position="458"/>
        <end position="460"/>
    </location>
</feature>
<feature type="strand" evidence="19">
    <location>
        <begin position="465"/>
        <end position="469"/>
    </location>
</feature>
<feature type="helix" evidence="19">
    <location>
        <begin position="472"/>
        <end position="476"/>
    </location>
</feature>
<feature type="strand" evidence="19">
    <location>
        <begin position="482"/>
        <end position="484"/>
    </location>
</feature>
<feature type="strand" evidence="19">
    <location>
        <begin position="488"/>
        <end position="493"/>
    </location>
</feature>
<feature type="helix" evidence="19">
    <location>
        <begin position="496"/>
        <end position="500"/>
    </location>
</feature>
<feature type="strand" evidence="19">
    <location>
        <begin position="505"/>
        <end position="508"/>
    </location>
</feature>
<feature type="strand" evidence="19">
    <location>
        <begin position="511"/>
        <end position="517"/>
    </location>
</feature>
<feature type="helix" evidence="19">
    <location>
        <begin position="520"/>
        <end position="524"/>
    </location>
</feature>
<feature type="strand" evidence="19">
    <location>
        <begin position="530"/>
        <end position="532"/>
    </location>
</feature>
<feature type="strand" evidence="19">
    <location>
        <begin position="535"/>
        <end position="541"/>
    </location>
</feature>
<feature type="helix" evidence="19">
    <location>
        <begin position="544"/>
        <end position="548"/>
    </location>
</feature>
<feature type="strand" evidence="19">
    <location>
        <begin position="553"/>
        <end position="556"/>
    </location>
</feature>
<feature type="strand" evidence="22">
    <location>
        <begin position="559"/>
        <end position="562"/>
    </location>
</feature>
<feature type="strand" evidence="19">
    <location>
        <begin position="563"/>
        <end position="565"/>
    </location>
</feature>
<feature type="strand" evidence="19">
    <location>
        <begin position="578"/>
        <end position="580"/>
    </location>
</feature>
<feature type="strand" evidence="19">
    <location>
        <begin position="583"/>
        <end position="589"/>
    </location>
</feature>
<feature type="helix" evidence="19">
    <location>
        <begin position="592"/>
        <end position="596"/>
    </location>
</feature>
<feature type="strand" evidence="19">
    <location>
        <begin position="601"/>
        <end position="604"/>
    </location>
</feature>
<feature type="strand" evidence="19">
    <location>
        <begin position="607"/>
        <end position="612"/>
    </location>
</feature>
<feature type="helix" evidence="19">
    <location>
        <begin position="616"/>
        <end position="620"/>
    </location>
</feature>
<feature type="strand" evidence="19">
    <location>
        <begin position="626"/>
        <end position="628"/>
    </location>
</feature>
<feature type="strand" evidence="19">
    <location>
        <begin position="631"/>
        <end position="636"/>
    </location>
</feature>
<feature type="helix" evidence="19">
    <location>
        <begin position="640"/>
        <end position="644"/>
    </location>
</feature>
<feature type="strand" evidence="19">
    <location>
        <begin position="650"/>
        <end position="652"/>
    </location>
</feature>
<feature type="strand" evidence="19">
    <location>
        <begin position="655"/>
        <end position="661"/>
    </location>
</feature>
<feature type="helix" evidence="19">
    <location>
        <begin position="666"/>
        <end position="670"/>
    </location>
</feature>
<feature type="helix" evidence="19">
    <location>
        <begin position="673"/>
        <end position="675"/>
    </location>
</feature>
<feature type="strand" evidence="19">
    <location>
        <begin position="680"/>
        <end position="684"/>
    </location>
</feature>
<accession>Q8VZG8</accession>
<accession>B9DG82</accession>
<accession>Q8H7F4</accession>
<accession>Q9LCZ6</accession>
<comment type="function">
    <text evidence="8 9 10 11">Acts as a receptor of SCOOP peptides from Brassicaceae plants regulating multiple processing including plant growth, development and stress responses (PubMed:33514716, PubMed:34535661). Perception of SCOOP peptides induces the association of MIK2 with the coreceptors BAK1/SERK3 and SERK4 and relays the signaling through the activation of receptor-like cytosolic kinases (RLCKs) BIK1 and PBL1 (PubMed:33514716, PubMed:34535661). Also able to detect SCOOP-like proteins (SCOOPL) present in fungal Fusarium spp. and bacterial Comamonadaceae to elicit various immune responses, including growth inhibition, ROS production, calcium Ca(2+) influx, MAPK activation and MYB51 promoter activation in roots, thus being required for resistance to several root pathogens (PubMed:33514716, PubMed:34535661). Involved in the pollen tube perception of the female signal (PubMed:26863186). Required to trigger defense responses toward generalist herbivores such as Spodoptera littoralis, probably via the activation of jasmonate and indole glucosinolate biosynthesis (PubMed:35401621).</text>
</comment>
<comment type="catalytic activity">
    <reaction evidence="15">
        <text>L-seryl-[protein] + ATP = O-phospho-L-seryl-[protein] + ADP + H(+)</text>
        <dbReference type="Rhea" id="RHEA:17989"/>
        <dbReference type="Rhea" id="RHEA-COMP:9863"/>
        <dbReference type="Rhea" id="RHEA-COMP:11604"/>
        <dbReference type="ChEBI" id="CHEBI:15378"/>
        <dbReference type="ChEBI" id="CHEBI:29999"/>
        <dbReference type="ChEBI" id="CHEBI:30616"/>
        <dbReference type="ChEBI" id="CHEBI:83421"/>
        <dbReference type="ChEBI" id="CHEBI:456216"/>
        <dbReference type="EC" id="2.7.11.1"/>
    </reaction>
</comment>
<comment type="catalytic activity">
    <reaction evidence="15">
        <text>L-threonyl-[protein] + ATP = O-phospho-L-threonyl-[protein] + ADP + H(+)</text>
        <dbReference type="Rhea" id="RHEA:46608"/>
        <dbReference type="Rhea" id="RHEA-COMP:11060"/>
        <dbReference type="Rhea" id="RHEA-COMP:11605"/>
        <dbReference type="ChEBI" id="CHEBI:15378"/>
        <dbReference type="ChEBI" id="CHEBI:30013"/>
        <dbReference type="ChEBI" id="CHEBI:30616"/>
        <dbReference type="ChEBI" id="CHEBI:61977"/>
        <dbReference type="ChEBI" id="CHEBI:456216"/>
        <dbReference type="EC" id="2.7.11.1"/>
    </reaction>
</comment>
<comment type="subunit">
    <text evidence="8 9 10">Interacts with MDIS1 and LURE1.2 (PubMed:26863186). Binds to SCOOP12; this interaction triggers the formation of complex between MIK2 and the BAK1/SERK3 and SERK4 coreceptors (PubMed:33514716, PubMed:34535661).</text>
</comment>
<comment type="interaction">
    <interactant intactId="EBI-2270407">
        <id>Q8VZG8</id>
    </interactant>
    <interactant intactId="EBI-16196186">
        <id>Q4VP08</id>
        <label>LURE1.2</label>
    </interactant>
    <organismsDiffer>false</organismsDiffer>
    <experiments>4</experiments>
</comment>
<comment type="interaction">
    <interactant intactId="EBI-2270407">
        <id>Q8VZG8</id>
    </interactant>
    <interactant intactId="EBI-16196163">
        <id>C0LGU7</id>
        <label>MDIS1</label>
    </interactant>
    <organismsDiffer>false</organismsDiffer>
    <experiments>5</experiments>
</comment>
<comment type="subcellular location">
    <subcellularLocation>
        <location evidence="7 16">Cell membrane</location>
        <topology evidence="7 16">Single-pass type I membrane protein</topology>
    </subcellularLocation>
</comment>
<comment type="alternative products">
    <event type="alternative splicing"/>
    <isoform>
        <id>Q8VZG8-1</id>
        <name>1</name>
        <sequence type="displayed"/>
    </isoform>
    <isoform>
        <id>Q8VZG8-2</id>
        <name>2</name>
        <sequence type="described" ref="VSP_038295"/>
    </isoform>
</comment>
<comment type="tissue specificity">
    <text evidence="8 10">Expressed in pollen tubes (PubMed:26863186). Highly expressed in shoots, roots and leaves (PubMed:34535661).</text>
</comment>
<comment type="induction">
    <text evidence="10">Induced by pathogen elicitors flg22 and elf18.</text>
</comment>
<comment type="disruption phenotype">
    <text evidence="9 10 11">Defect in apoplastic reactive oxygen species (ROS) production upon stimulation with some immune elicitors such as flg22 and AtPep1, and in response to SCOOP10 and SCOOP12 (PubMed:33514716, PubMed:34535661). Disturbed SCOOP12-triggered BAK1 phosphorylation on Ser-612 (PubMed:33514716). Insensitivity to SCOOP peptides including SCOOP4, SCOOP6, SCOOP8, SCOOP10, SCOOP12, SCOOP13, SCOOP14, SCOOP15, SCOOP20 and SCOOP23 leading to the loss of modified gene expression of several genes (PubMed:34535661). Altered activation of MAPK (e.g. MPK3, MPK4 and MPK6) and root meristems distortion triggered by SCOOP10 and SCOOP12 (PubMed:34535661). Reduced sensitivity to proteinous elicitors containing SCOOP-like sequences (SCOOPL) with SxS motifs isolated from several Fusarium spp, thus leading to reduced SCOOPL-induced growth inhibition, ROS production, calcium Ca(2+) influx, MAPK activation and MYB51 promoter activation in roots, hallmarks of defense responses (PubMed:34535661). Decreased resistance against the generalist herbivore Spodoptera littoralis, but not toward the specialist herbivore Pieris brassicae, and associated with reduced accumulation of jasmonic acid (JA), jasmonate-isoleucine and indolic glucosinolates due to a lower expression of several genes (e.g. CYP79B2, CYP79B3, CYP83B1 and GSTF9) (PubMed:35401621).</text>
</comment>
<comment type="similarity">
    <text evidence="5">Belongs to the protein kinase superfamily. Ser/Thr protein kinase family.</text>
</comment>
<comment type="sequence caution" evidence="15">
    <conflict type="erroneous initiation">
        <sequence resource="EMBL-CDS" id="AAN60259"/>
    </conflict>
    <text>Truncated N-terminus.</text>
</comment>
<comment type="sequence caution" evidence="15">
    <conflict type="erroneous gene model prediction">
        <sequence resource="EMBL-CDS" id="CAB78010"/>
    </conflict>
</comment>
<comment type="sequence caution" evidence="15">
    <conflict type="erroneous gene model prediction">
        <sequence resource="EMBL-CDS" id="CAB82121"/>
    </conflict>
</comment>
<keyword id="KW-0002">3D-structure</keyword>
<keyword id="KW-0025">Alternative splicing</keyword>
<keyword id="KW-0067">ATP-binding</keyword>
<keyword id="KW-1003">Cell membrane</keyword>
<keyword id="KW-0325">Glycoprotein</keyword>
<keyword id="KW-1184">Jasmonic acid signaling pathway</keyword>
<keyword id="KW-0418">Kinase</keyword>
<keyword id="KW-0433">Leucine-rich repeat</keyword>
<keyword id="KW-0472">Membrane</keyword>
<keyword id="KW-0547">Nucleotide-binding</keyword>
<keyword id="KW-0597">Phosphoprotein</keyword>
<keyword id="KW-0611">Plant defense</keyword>
<keyword id="KW-0675">Receptor</keyword>
<keyword id="KW-1185">Reference proteome</keyword>
<keyword id="KW-0677">Repeat</keyword>
<keyword id="KW-0723">Serine/threonine-protein kinase</keyword>
<keyword id="KW-0732">Signal</keyword>
<keyword id="KW-0808">Transferase</keyword>
<keyword id="KW-0812">Transmembrane</keyword>
<keyword id="KW-1133">Transmembrane helix</keyword>
<proteinExistence type="evidence at protein level"/>